<keyword id="KW-0143">Chaperone</keyword>
<keyword id="KW-0963">Cytoplasm</keyword>
<protein>
    <recommendedName>
        <fullName evidence="1">Co-chaperonin GroES</fullName>
    </recommendedName>
    <alternativeName>
        <fullName evidence="1">10 kDa chaperonin</fullName>
    </alternativeName>
    <alternativeName>
        <fullName evidence="1">Chaperonin-10</fullName>
        <shortName evidence="1">Cpn10</shortName>
    </alternativeName>
</protein>
<organism>
    <name type="scientific">Staphylococcus haemolyticus (strain JCSC1435)</name>
    <dbReference type="NCBI Taxonomy" id="279808"/>
    <lineage>
        <taxon>Bacteria</taxon>
        <taxon>Bacillati</taxon>
        <taxon>Bacillota</taxon>
        <taxon>Bacilli</taxon>
        <taxon>Bacillales</taxon>
        <taxon>Staphylococcaceae</taxon>
        <taxon>Staphylococcus</taxon>
    </lineage>
</organism>
<name>CH10_STAHJ</name>
<proteinExistence type="inferred from homology"/>
<comment type="function">
    <text evidence="1">Together with the chaperonin GroEL, plays an essential role in assisting protein folding. The GroEL-GroES system forms a nano-cage that allows encapsulation of the non-native substrate proteins and provides a physical environment optimized to promote and accelerate protein folding. GroES binds to the apical surface of the GroEL ring, thereby capping the opening of the GroEL channel.</text>
</comment>
<comment type="subunit">
    <text evidence="1">Heptamer of 7 subunits arranged in a ring. Interacts with the chaperonin GroEL.</text>
</comment>
<comment type="subcellular location">
    <subcellularLocation>
        <location evidence="1">Cytoplasm</location>
    </subcellularLocation>
</comment>
<comment type="similarity">
    <text evidence="1">Belongs to the GroES chaperonin family.</text>
</comment>
<sequence>MLKPLGNRVIIERKEQEQTTKSGIVLTDSAKEKSNEGIVVAVGTGRVLDNGEKVAPEVKEGDRVVFQEYAGSEVKRGDKTYLILNVEDLLAIIED</sequence>
<dbReference type="EMBL" id="AP006716">
    <property type="protein sequence ID" value="BAE04310.1"/>
    <property type="molecule type" value="Genomic_DNA"/>
</dbReference>
<dbReference type="RefSeq" id="WP_011275309.1">
    <property type="nucleotide sequence ID" value="NC_007168.1"/>
</dbReference>
<dbReference type="SMR" id="Q4L7R5"/>
<dbReference type="KEGG" id="sha:SH1001"/>
<dbReference type="eggNOG" id="COG0234">
    <property type="taxonomic scope" value="Bacteria"/>
</dbReference>
<dbReference type="HOGENOM" id="CLU_132825_2_1_9"/>
<dbReference type="OrthoDB" id="9806791at2"/>
<dbReference type="Proteomes" id="UP000000543">
    <property type="component" value="Chromosome"/>
</dbReference>
<dbReference type="GO" id="GO:0005737">
    <property type="term" value="C:cytoplasm"/>
    <property type="evidence" value="ECO:0007669"/>
    <property type="project" value="UniProtKB-SubCell"/>
</dbReference>
<dbReference type="GO" id="GO:0005524">
    <property type="term" value="F:ATP binding"/>
    <property type="evidence" value="ECO:0007669"/>
    <property type="project" value="InterPro"/>
</dbReference>
<dbReference type="GO" id="GO:0046872">
    <property type="term" value="F:metal ion binding"/>
    <property type="evidence" value="ECO:0007669"/>
    <property type="project" value="TreeGrafter"/>
</dbReference>
<dbReference type="GO" id="GO:0044183">
    <property type="term" value="F:protein folding chaperone"/>
    <property type="evidence" value="ECO:0007669"/>
    <property type="project" value="InterPro"/>
</dbReference>
<dbReference type="GO" id="GO:0051087">
    <property type="term" value="F:protein-folding chaperone binding"/>
    <property type="evidence" value="ECO:0007669"/>
    <property type="project" value="TreeGrafter"/>
</dbReference>
<dbReference type="GO" id="GO:0051082">
    <property type="term" value="F:unfolded protein binding"/>
    <property type="evidence" value="ECO:0007669"/>
    <property type="project" value="TreeGrafter"/>
</dbReference>
<dbReference type="GO" id="GO:0051085">
    <property type="term" value="P:chaperone cofactor-dependent protein refolding"/>
    <property type="evidence" value="ECO:0007669"/>
    <property type="project" value="TreeGrafter"/>
</dbReference>
<dbReference type="CDD" id="cd00320">
    <property type="entry name" value="cpn10"/>
    <property type="match status" value="1"/>
</dbReference>
<dbReference type="FunFam" id="2.30.33.40:FF:000001">
    <property type="entry name" value="10 kDa chaperonin"/>
    <property type="match status" value="1"/>
</dbReference>
<dbReference type="Gene3D" id="2.30.33.40">
    <property type="entry name" value="GroES chaperonin"/>
    <property type="match status" value="1"/>
</dbReference>
<dbReference type="HAMAP" id="MF_00580">
    <property type="entry name" value="CH10"/>
    <property type="match status" value="1"/>
</dbReference>
<dbReference type="InterPro" id="IPR020818">
    <property type="entry name" value="Chaperonin_GroES"/>
</dbReference>
<dbReference type="InterPro" id="IPR037124">
    <property type="entry name" value="Chaperonin_GroES_sf"/>
</dbReference>
<dbReference type="InterPro" id="IPR018369">
    <property type="entry name" value="Chaprnonin_Cpn10_CS"/>
</dbReference>
<dbReference type="InterPro" id="IPR011032">
    <property type="entry name" value="GroES-like_sf"/>
</dbReference>
<dbReference type="NCBIfam" id="NF001531">
    <property type="entry name" value="PRK00364.2-2"/>
    <property type="match status" value="1"/>
</dbReference>
<dbReference type="NCBIfam" id="NF001532">
    <property type="entry name" value="PRK00364.2-3"/>
    <property type="match status" value="1"/>
</dbReference>
<dbReference type="NCBIfam" id="NF001533">
    <property type="entry name" value="PRK00364.2-4"/>
    <property type="match status" value="1"/>
</dbReference>
<dbReference type="NCBIfam" id="NF001534">
    <property type="entry name" value="PRK00364.2-5"/>
    <property type="match status" value="1"/>
</dbReference>
<dbReference type="PANTHER" id="PTHR10772">
    <property type="entry name" value="10 KDA HEAT SHOCK PROTEIN"/>
    <property type="match status" value="1"/>
</dbReference>
<dbReference type="PANTHER" id="PTHR10772:SF58">
    <property type="entry name" value="CO-CHAPERONIN GROES"/>
    <property type="match status" value="1"/>
</dbReference>
<dbReference type="Pfam" id="PF00166">
    <property type="entry name" value="Cpn10"/>
    <property type="match status" value="1"/>
</dbReference>
<dbReference type="PRINTS" id="PR00297">
    <property type="entry name" value="CHAPERONIN10"/>
</dbReference>
<dbReference type="SMART" id="SM00883">
    <property type="entry name" value="Cpn10"/>
    <property type="match status" value="1"/>
</dbReference>
<dbReference type="SUPFAM" id="SSF50129">
    <property type="entry name" value="GroES-like"/>
    <property type="match status" value="1"/>
</dbReference>
<dbReference type="PROSITE" id="PS00681">
    <property type="entry name" value="CHAPERONINS_CPN10"/>
    <property type="match status" value="1"/>
</dbReference>
<reference key="1">
    <citation type="journal article" date="2005" name="J. Bacteriol.">
        <title>Whole-genome sequencing of Staphylococcus haemolyticus uncovers the extreme plasticity of its genome and the evolution of human-colonizing staphylococcal species.</title>
        <authorList>
            <person name="Takeuchi F."/>
            <person name="Watanabe S."/>
            <person name="Baba T."/>
            <person name="Yuzawa H."/>
            <person name="Ito T."/>
            <person name="Morimoto Y."/>
            <person name="Kuroda M."/>
            <person name="Cui L."/>
            <person name="Takahashi M."/>
            <person name="Ankai A."/>
            <person name="Baba S."/>
            <person name="Fukui S."/>
            <person name="Lee J.C."/>
            <person name="Hiramatsu K."/>
        </authorList>
    </citation>
    <scope>NUCLEOTIDE SEQUENCE [LARGE SCALE GENOMIC DNA]</scope>
    <source>
        <strain>JCSC1435</strain>
    </source>
</reference>
<evidence type="ECO:0000255" key="1">
    <source>
        <dbReference type="HAMAP-Rule" id="MF_00580"/>
    </source>
</evidence>
<accession>Q4L7R5</accession>
<gene>
    <name evidence="1" type="primary">groES</name>
    <name evidence="1" type="synonym">groS</name>
    <name type="ordered locus">SH1001</name>
</gene>
<feature type="chain" id="PRO_0000174849" description="Co-chaperonin GroES">
    <location>
        <begin position="1"/>
        <end position="95"/>
    </location>
</feature>